<reference key="1">
    <citation type="journal article" date="2002" name="Nature">
        <title>The genome sequence and structure of rice chromosome 1.</title>
        <authorList>
            <person name="Sasaki T."/>
            <person name="Matsumoto T."/>
            <person name="Yamamoto K."/>
            <person name="Sakata K."/>
            <person name="Baba T."/>
            <person name="Katayose Y."/>
            <person name="Wu J."/>
            <person name="Niimura Y."/>
            <person name="Cheng Z."/>
            <person name="Nagamura Y."/>
            <person name="Antonio B.A."/>
            <person name="Kanamori H."/>
            <person name="Hosokawa S."/>
            <person name="Masukawa M."/>
            <person name="Arikawa K."/>
            <person name="Chiden Y."/>
            <person name="Hayashi M."/>
            <person name="Okamoto M."/>
            <person name="Ando T."/>
            <person name="Aoki H."/>
            <person name="Arita K."/>
            <person name="Hamada M."/>
            <person name="Harada C."/>
            <person name="Hijishita S."/>
            <person name="Honda M."/>
            <person name="Ichikawa Y."/>
            <person name="Idonuma A."/>
            <person name="Iijima M."/>
            <person name="Ikeda M."/>
            <person name="Ikeno M."/>
            <person name="Ito S."/>
            <person name="Ito T."/>
            <person name="Ito Y."/>
            <person name="Ito Y."/>
            <person name="Iwabuchi A."/>
            <person name="Kamiya K."/>
            <person name="Karasawa W."/>
            <person name="Katagiri S."/>
            <person name="Kikuta A."/>
            <person name="Kobayashi N."/>
            <person name="Kono I."/>
            <person name="Machita K."/>
            <person name="Maehara T."/>
            <person name="Mizuno H."/>
            <person name="Mizubayashi T."/>
            <person name="Mukai Y."/>
            <person name="Nagasaki H."/>
            <person name="Nakashima M."/>
            <person name="Nakama Y."/>
            <person name="Nakamichi Y."/>
            <person name="Nakamura M."/>
            <person name="Namiki N."/>
            <person name="Negishi M."/>
            <person name="Ohta I."/>
            <person name="Ono N."/>
            <person name="Saji S."/>
            <person name="Sakai K."/>
            <person name="Shibata M."/>
            <person name="Shimokawa T."/>
            <person name="Shomura A."/>
            <person name="Song J."/>
            <person name="Takazaki Y."/>
            <person name="Terasawa K."/>
            <person name="Tsuji K."/>
            <person name="Waki K."/>
            <person name="Yamagata H."/>
            <person name="Yamane H."/>
            <person name="Yoshiki S."/>
            <person name="Yoshihara R."/>
            <person name="Yukawa K."/>
            <person name="Zhong H."/>
            <person name="Iwama H."/>
            <person name="Endo T."/>
            <person name="Ito H."/>
            <person name="Hahn J.H."/>
            <person name="Kim H.-I."/>
            <person name="Eun M.-Y."/>
            <person name="Yano M."/>
            <person name="Jiang J."/>
            <person name="Gojobori T."/>
        </authorList>
    </citation>
    <scope>NUCLEOTIDE SEQUENCE [LARGE SCALE GENOMIC DNA]</scope>
    <source>
        <strain>cv. Nipponbare</strain>
    </source>
</reference>
<reference key="2">
    <citation type="journal article" date="2005" name="Nature">
        <title>The map-based sequence of the rice genome.</title>
        <authorList>
            <consortium name="International rice genome sequencing project (IRGSP)"/>
        </authorList>
    </citation>
    <scope>NUCLEOTIDE SEQUENCE [LARGE SCALE GENOMIC DNA]</scope>
    <source>
        <strain>cv. Nipponbare</strain>
    </source>
</reference>
<reference key="3">
    <citation type="journal article" date="2008" name="Nucleic Acids Res.">
        <title>The rice annotation project database (RAP-DB): 2008 update.</title>
        <authorList>
            <consortium name="The rice annotation project (RAP)"/>
        </authorList>
    </citation>
    <scope>GENOME REANNOTATION</scope>
    <source>
        <strain>cv. Nipponbare</strain>
    </source>
</reference>
<reference key="4">
    <citation type="journal article" date="2013" name="Rice">
        <title>Improvement of the Oryza sativa Nipponbare reference genome using next generation sequence and optical map data.</title>
        <authorList>
            <person name="Kawahara Y."/>
            <person name="de la Bastide M."/>
            <person name="Hamilton J.P."/>
            <person name="Kanamori H."/>
            <person name="McCombie W.R."/>
            <person name="Ouyang S."/>
            <person name="Schwartz D.C."/>
            <person name="Tanaka T."/>
            <person name="Wu J."/>
            <person name="Zhou S."/>
            <person name="Childs K.L."/>
            <person name="Davidson R.M."/>
            <person name="Lin H."/>
            <person name="Quesada-Ocampo L."/>
            <person name="Vaillancourt B."/>
            <person name="Sakai H."/>
            <person name="Lee S.S."/>
            <person name="Kim J."/>
            <person name="Numa H."/>
            <person name="Itoh T."/>
            <person name="Buell C.R."/>
            <person name="Matsumoto T."/>
        </authorList>
    </citation>
    <scope>GENOME REANNOTATION</scope>
    <source>
        <strain>cv. Nipponbare</strain>
    </source>
</reference>
<reference key="5">
    <citation type="journal article" date="2005" name="PLoS Biol.">
        <title>The genomes of Oryza sativa: a history of duplications.</title>
        <authorList>
            <person name="Yu J."/>
            <person name="Wang J."/>
            <person name="Lin W."/>
            <person name="Li S."/>
            <person name="Li H."/>
            <person name="Zhou J."/>
            <person name="Ni P."/>
            <person name="Dong W."/>
            <person name="Hu S."/>
            <person name="Zeng C."/>
            <person name="Zhang J."/>
            <person name="Zhang Y."/>
            <person name="Li R."/>
            <person name="Xu Z."/>
            <person name="Li S."/>
            <person name="Li X."/>
            <person name="Zheng H."/>
            <person name="Cong L."/>
            <person name="Lin L."/>
            <person name="Yin J."/>
            <person name="Geng J."/>
            <person name="Li G."/>
            <person name="Shi J."/>
            <person name="Liu J."/>
            <person name="Lv H."/>
            <person name="Li J."/>
            <person name="Wang J."/>
            <person name="Deng Y."/>
            <person name="Ran L."/>
            <person name="Shi X."/>
            <person name="Wang X."/>
            <person name="Wu Q."/>
            <person name="Li C."/>
            <person name="Ren X."/>
            <person name="Wang J."/>
            <person name="Wang X."/>
            <person name="Li D."/>
            <person name="Liu D."/>
            <person name="Zhang X."/>
            <person name="Ji Z."/>
            <person name="Zhao W."/>
            <person name="Sun Y."/>
            <person name="Zhang Z."/>
            <person name="Bao J."/>
            <person name="Han Y."/>
            <person name="Dong L."/>
            <person name="Ji J."/>
            <person name="Chen P."/>
            <person name="Wu S."/>
            <person name="Liu J."/>
            <person name="Xiao Y."/>
            <person name="Bu D."/>
            <person name="Tan J."/>
            <person name="Yang L."/>
            <person name="Ye C."/>
            <person name="Zhang J."/>
            <person name="Xu J."/>
            <person name="Zhou Y."/>
            <person name="Yu Y."/>
            <person name="Zhang B."/>
            <person name="Zhuang S."/>
            <person name="Wei H."/>
            <person name="Liu B."/>
            <person name="Lei M."/>
            <person name="Yu H."/>
            <person name="Li Y."/>
            <person name="Xu H."/>
            <person name="Wei S."/>
            <person name="He X."/>
            <person name="Fang L."/>
            <person name="Zhang Z."/>
            <person name="Zhang Y."/>
            <person name="Huang X."/>
            <person name="Su Z."/>
            <person name="Tong W."/>
            <person name="Li J."/>
            <person name="Tong Z."/>
            <person name="Li S."/>
            <person name="Ye J."/>
            <person name="Wang L."/>
            <person name="Fang L."/>
            <person name="Lei T."/>
            <person name="Chen C.-S."/>
            <person name="Chen H.-C."/>
            <person name="Xu Z."/>
            <person name="Li H."/>
            <person name="Huang H."/>
            <person name="Zhang F."/>
            <person name="Xu H."/>
            <person name="Li N."/>
            <person name="Zhao C."/>
            <person name="Li S."/>
            <person name="Dong L."/>
            <person name="Huang Y."/>
            <person name="Li L."/>
            <person name="Xi Y."/>
            <person name="Qi Q."/>
            <person name="Li W."/>
            <person name="Zhang B."/>
            <person name="Hu W."/>
            <person name="Zhang Y."/>
            <person name="Tian X."/>
            <person name="Jiao Y."/>
            <person name="Liang X."/>
            <person name="Jin J."/>
            <person name="Gao L."/>
            <person name="Zheng W."/>
            <person name="Hao B."/>
            <person name="Liu S.-M."/>
            <person name="Wang W."/>
            <person name="Yuan L."/>
            <person name="Cao M."/>
            <person name="McDermott J."/>
            <person name="Samudrala R."/>
            <person name="Wang J."/>
            <person name="Wong G.K.-S."/>
            <person name="Yang H."/>
        </authorList>
    </citation>
    <scope>NUCLEOTIDE SEQUENCE [LARGE SCALE GENOMIC DNA]</scope>
    <source>
        <strain>cv. Nipponbare</strain>
    </source>
</reference>
<reference key="6">
    <citation type="journal article" date="2003" name="Science">
        <title>Collection, mapping, and annotation of over 28,000 cDNA clones from japonica rice.</title>
        <authorList>
            <consortium name="The rice full-length cDNA consortium"/>
        </authorList>
    </citation>
    <scope>NUCLEOTIDE SEQUENCE [LARGE SCALE MRNA]</scope>
    <source>
        <strain>cv. Nipponbare</strain>
    </source>
</reference>
<reference key="7">
    <citation type="journal article" date="2005" name="Plant J.">
        <title>EGY1 encodes a membrane-associated and ATP-independent metalloprotease that is required for chloroplast development.</title>
        <authorList>
            <person name="Chen G."/>
            <person name="Bi Y.R."/>
            <person name="Li N."/>
        </authorList>
    </citation>
    <scope>GENE FAMILY</scope>
</reference>
<dbReference type="EC" id="3.4.24.-"/>
<dbReference type="EMBL" id="AP002483">
    <property type="protein sequence ID" value="BAD61067.1"/>
    <property type="status" value="ALT_INIT"/>
    <property type="molecule type" value="Genomic_DNA"/>
</dbReference>
<dbReference type="EMBL" id="AP008207">
    <property type="protein sequence ID" value="BAF03903.1"/>
    <property type="molecule type" value="Genomic_DNA"/>
</dbReference>
<dbReference type="EMBL" id="AP014957">
    <property type="protein sequence ID" value="BAS70326.1"/>
    <property type="molecule type" value="Genomic_DNA"/>
</dbReference>
<dbReference type="EMBL" id="CM000138">
    <property type="protein sequence ID" value="EEE53845.1"/>
    <property type="molecule type" value="Genomic_DNA"/>
</dbReference>
<dbReference type="EMBL" id="AK065031">
    <property type="status" value="NOT_ANNOTATED_CDS"/>
    <property type="molecule type" value="mRNA"/>
</dbReference>
<dbReference type="RefSeq" id="XP_015613107.1">
    <property type="nucleotide sequence ID" value="XM_015757621.1"/>
</dbReference>
<dbReference type="FunCoup" id="Q0JQS5">
    <property type="interactions" value="968"/>
</dbReference>
<dbReference type="STRING" id="39947.Q0JQS5"/>
<dbReference type="PaxDb" id="39947-Q0JQS5"/>
<dbReference type="EnsemblPlants" id="Os01t0142100-01">
    <property type="protein sequence ID" value="Os01t0142100-01"/>
    <property type="gene ID" value="Os01g0142100"/>
</dbReference>
<dbReference type="Gramene" id="Os01t0142100-01">
    <property type="protein sequence ID" value="Os01t0142100-01"/>
    <property type="gene ID" value="Os01g0142100"/>
</dbReference>
<dbReference type="KEGG" id="dosa:Os01g0142100"/>
<dbReference type="eggNOG" id="ENOG502QVZT">
    <property type="taxonomic scope" value="Eukaryota"/>
</dbReference>
<dbReference type="HOGENOM" id="CLU_030692_0_0_1"/>
<dbReference type="InParanoid" id="Q0JQS5"/>
<dbReference type="OMA" id="TIPYQEG"/>
<dbReference type="OrthoDB" id="5738at2759"/>
<dbReference type="Proteomes" id="UP000000763">
    <property type="component" value="Chromosome 1"/>
</dbReference>
<dbReference type="Proteomes" id="UP000007752">
    <property type="component" value="Chromosome 1"/>
</dbReference>
<dbReference type="Proteomes" id="UP000059680">
    <property type="component" value="Chromosome 1"/>
</dbReference>
<dbReference type="ExpressionAtlas" id="Q0JQS5">
    <property type="expression patterns" value="baseline and differential"/>
</dbReference>
<dbReference type="GO" id="GO:0031969">
    <property type="term" value="C:chloroplast membrane"/>
    <property type="evidence" value="ECO:0007669"/>
    <property type="project" value="UniProtKB-SubCell"/>
</dbReference>
<dbReference type="GO" id="GO:0008237">
    <property type="term" value="F:metallopeptidase activity"/>
    <property type="evidence" value="ECO:0007669"/>
    <property type="project" value="UniProtKB-KW"/>
</dbReference>
<dbReference type="GO" id="GO:0006508">
    <property type="term" value="P:proteolysis"/>
    <property type="evidence" value="ECO:0007669"/>
    <property type="project" value="UniProtKB-KW"/>
</dbReference>
<dbReference type="CDD" id="cd06160">
    <property type="entry name" value="S2P-M50_like_2"/>
    <property type="match status" value="1"/>
</dbReference>
<dbReference type="InterPro" id="IPR044838">
    <property type="entry name" value="EGY1-like"/>
</dbReference>
<dbReference type="InterPro" id="IPR008915">
    <property type="entry name" value="Peptidase_M50"/>
</dbReference>
<dbReference type="PANTHER" id="PTHR31412">
    <property type="entry name" value="ZINC METALLOPROTEASE EGY1"/>
    <property type="match status" value="1"/>
</dbReference>
<dbReference type="PANTHER" id="PTHR31412:SF5">
    <property type="entry name" value="ZINC METALLOPROTEASE EGY2, CHLOROPLASTIC-RELATED"/>
    <property type="match status" value="1"/>
</dbReference>
<dbReference type="Pfam" id="PF02163">
    <property type="entry name" value="Peptidase_M50"/>
    <property type="match status" value="1"/>
</dbReference>
<dbReference type="PROSITE" id="PS00142">
    <property type="entry name" value="ZINC_PROTEASE"/>
    <property type="match status" value="1"/>
</dbReference>
<organism>
    <name type="scientific">Oryza sativa subsp. japonica</name>
    <name type="common">Rice</name>
    <dbReference type="NCBI Taxonomy" id="39947"/>
    <lineage>
        <taxon>Eukaryota</taxon>
        <taxon>Viridiplantae</taxon>
        <taxon>Streptophyta</taxon>
        <taxon>Embryophyta</taxon>
        <taxon>Tracheophyta</taxon>
        <taxon>Spermatophyta</taxon>
        <taxon>Magnoliopsida</taxon>
        <taxon>Liliopsida</taxon>
        <taxon>Poales</taxon>
        <taxon>Poaceae</taxon>
        <taxon>BOP clade</taxon>
        <taxon>Oryzoideae</taxon>
        <taxon>Oryzeae</taxon>
        <taxon>Oryzinae</taxon>
        <taxon>Oryza</taxon>
        <taxon>Oryza sativa</taxon>
    </lineage>
</organism>
<feature type="transit peptide" description="Chloroplast" evidence="2">
    <location>
        <begin position="1"/>
        <end position="64"/>
    </location>
</feature>
<feature type="chain" id="PRO_0000428648" description="Probable zinc metalloprotease EGY2, chloroplastic">
    <location>
        <begin position="65"/>
        <end position="546"/>
    </location>
</feature>
<feature type="transmembrane region" description="Helical" evidence="2">
    <location>
        <begin position="257"/>
        <end position="277"/>
    </location>
</feature>
<feature type="transmembrane region" description="Helical" evidence="2">
    <location>
        <begin position="301"/>
        <end position="321"/>
    </location>
</feature>
<feature type="transmembrane region" description="Helical" evidence="2">
    <location>
        <begin position="326"/>
        <end position="346"/>
    </location>
</feature>
<feature type="transmembrane region" description="Helical" evidence="2">
    <location>
        <begin position="364"/>
        <end position="384"/>
    </location>
</feature>
<feature type="transmembrane region" description="Helical" evidence="2">
    <location>
        <begin position="427"/>
        <end position="447"/>
    </location>
</feature>
<feature type="transmembrane region" description="Helical" evidence="2">
    <location>
        <begin position="474"/>
        <end position="494"/>
    </location>
</feature>
<feature type="transmembrane region" description="Helical" evidence="2">
    <location>
        <begin position="514"/>
        <end position="534"/>
    </location>
</feature>
<feature type="region of interest" description="Disordered" evidence="3">
    <location>
        <begin position="67"/>
        <end position="143"/>
    </location>
</feature>
<feature type="compositionally biased region" description="Acidic residues" evidence="3">
    <location>
        <begin position="69"/>
        <end position="86"/>
    </location>
</feature>
<feature type="compositionally biased region" description="Polar residues" evidence="3">
    <location>
        <begin position="89"/>
        <end position="110"/>
    </location>
</feature>
<feature type="compositionally biased region" description="Polar residues" evidence="3">
    <location>
        <begin position="118"/>
        <end position="130"/>
    </location>
</feature>
<feature type="sequence conflict" description="In Ref. 6; AK065031." evidence="4" ref="6">
    <original>T</original>
    <variation>A</variation>
    <location>
        <position position="255"/>
    </location>
</feature>
<comment type="function">
    <text evidence="1">Probable membrane-associated metalloprotease that may be involved in chloroplast development.</text>
</comment>
<comment type="subcellular location">
    <subcellularLocation>
        <location evidence="4">Plastid</location>
        <location evidence="4">Chloroplast membrane</location>
        <topology evidence="4">Multi-pass membrane protein</topology>
    </subcellularLocation>
</comment>
<comment type="similarity">
    <text evidence="4">Belongs to the peptidase M50B family.</text>
</comment>
<comment type="sequence caution" evidence="4">
    <conflict type="erroneous initiation">
        <sequence resource="EMBL-CDS" id="BAD61067"/>
    </conflict>
    <text>Truncated N-terminus.</text>
</comment>
<gene>
    <name type="primary">EGY2</name>
    <name type="ordered locus">Os01g0142100</name>
    <name type="ordered locus">LOC_Os01g04900</name>
    <name type="ORF">OsJ_00322</name>
    <name type="ORF">P0019D06.11</name>
</gene>
<protein>
    <recommendedName>
        <fullName>Probable zinc metalloprotease EGY2, chloroplastic</fullName>
        <ecNumber>3.4.24.-</ecNumber>
    </recommendedName>
    <alternativeName>
        <fullName>Protein ETHYLENE-DEPENDENT GRAVITROPISM-DEFICIENT AND YELLOW-GREEN 2</fullName>
        <shortName>OsEGY2</shortName>
    </alternativeName>
</protein>
<proteinExistence type="evidence at transcript level"/>
<sequence length="546" mass="58690">MQLPAMSCSPSQSSAAAAAAAYGCCQRILLASTSLPATGRPARLGLKLRSTHSLQIRNRRFVCQAMTETEPDGDGNGDEEKEELGDDASSPSVDSVTQENGSAESETNADNTKDETVNTEPLSSSDTVQNIDGDATPASDAQENVEVVDVAVGSPLPGMKQQLDESVRIPKATIDILKDQVFGFDTFFVTSQEPYEGGILFKGNLRGQPAKSYEKITNRLQNKFGDQYKLFLLINPEDDKPVAVVVPRQTLQPETTAVPEWFAAASFGVVTIFTLLLRNVPLLQDNLLSTFDNLELLKDGVYGALVTAAIIGVHEIAHILAARDTGIKLAVPYFVPSWQIGSFGAITRIVNIVRNREDLLKVAAAGPLAGFSLGFVLLLLGFILPPSDGLGLVIDPAVFHESFLVGGLAKLILGDALKEGTKLSINPLVLWAWAGLLINAINSIPAGELDGGRIAFAMWGRKISSRISSLAIGLLGISALFNDVAFYWVVLIFFLQRGPISPLSEEITEPENNYISIGVAILLFGLLVCLPYPFPFDPSQLTDFDL</sequence>
<name>EGY2_ORYSJ</name>
<evidence type="ECO:0000250" key="1"/>
<evidence type="ECO:0000255" key="2"/>
<evidence type="ECO:0000256" key="3">
    <source>
        <dbReference type="SAM" id="MobiDB-lite"/>
    </source>
</evidence>
<evidence type="ECO:0000305" key="4"/>
<accession>Q0JQS5</accession>
<accession>A0A0P0UY48</accession>
<accession>Q5ZEN4</accession>
<keyword id="KW-0150">Chloroplast</keyword>
<keyword id="KW-0378">Hydrolase</keyword>
<keyword id="KW-0472">Membrane</keyword>
<keyword id="KW-0482">Metalloprotease</keyword>
<keyword id="KW-0934">Plastid</keyword>
<keyword id="KW-0645">Protease</keyword>
<keyword id="KW-1185">Reference proteome</keyword>
<keyword id="KW-0809">Transit peptide</keyword>
<keyword id="KW-0812">Transmembrane</keyword>
<keyword id="KW-1133">Transmembrane helix</keyword>